<evidence type="ECO:0000255" key="1">
    <source>
        <dbReference type="HAMAP-Rule" id="MF_01684"/>
    </source>
</evidence>
<feature type="chain" id="PRO_0000359274" description="5'-methylthioadenosine/S-adenosylhomocysteine nucleosidase">
    <location>
        <begin position="1"/>
        <end position="231"/>
    </location>
</feature>
<feature type="active site" description="Proton acceptor" evidence="1">
    <location>
        <position position="12"/>
    </location>
</feature>
<feature type="active site" description="Proton donor" evidence="1">
    <location>
        <position position="198"/>
    </location>
</feature>
<feature type="binding site" evidence="1">
    <location>
        <position position="78"/>
    </location>
    <ligand>
        <name>substrate</name>
    </ligand>
</feature>
<feature type="binding site" evidence="1">
    <location>
        <position position="153"/>
    </location>
    <ligand>
        <name>substrate</name>
    </ligand>
</feature>
<feature type="binding site" evidence="1">
    <location>
        <begin position="174"/>
        <end position="175"/>
    </location>
    <ligand>
        <name>substrate</name>
    </ligand>
</feature>
<keyword id="KW-0028">Amino-acid biosynthesis</keyword>
<keyword id="KW-0378">Hydrolase</keyword>
<keyword id="KW-0486">Methionine biosynthesis</keyword>
<keyword id="KW-1185">Reference proteome</keyword>
<organism>
    <name type="scientific">Bacillus cereus (strain ATCC 14579 / DSM 31 / CCUG 7414 / JCM 2152 / NBRC 15305 / NCIMB 9373 / NCTC 2599 / NRRL B-3711)</name>
    <dbReference type="NCBI Taxonomy" id="226900"/>
    <lineage>
        <taxon>Bacteria</taxon>
        <taxon>Bacillati</taxon>
        <taxon>Bacillota</taxon>
        <taxon>Bacilli</taxon>
        <taxon>Bacillales</taxon>
        <taxon>Bacillaceae</taxon>
        <taxon>Bacillus</taxon>
        <taxon>Bacillus cereus group</taxon>
    </lineage>
</organism>
<name>MTNN_BACCR</name>
<protein>
    <recommendedName>
        <fullName evidence="1">5'-methylthioadenosine/S-adenosylhomocysteine nucleosidase</fullName>
        <shortName evidence="1">MTA/SAH nucleosidase</shortName>
        <shortName evidence="1">MTAN</shortName>
        <ecNumber evidence="1">3.2.2.9</ecNumber>
    </recommendedName>
    <alternativeName>
        <fullName evidence="1">5'-deoxyadenosine nucleosidase</fullName>
        <shortName evidence="1">DOA nucleosidase</shortName>
        <shortName evidence="1">dAdo nucleosidase</shortName>
    </alternativeName>
    <alternativeName>
        <fullName evidence="1">5'-methylthioadenosine nucleosidase</fullName>
        <shortName evidence="1">MTA nucleosidase</shortName>
    </alternativeName>
    <alternativeName>
        <fullName evidence="1">S-adenosylhomocysteine nucleosidase</fullName>
        <shortName evidence="1">AdoHcy nucleosidase</shortName>
        <shortName evidence="1">SAH nucleosidase</shortName>
        <shortName evidence="1">SRH nucleosidase</shortName>
    </alternativeName>
</protein>
<sequence>MRIAVIGAMEEEVRILRDKLEQAETETVAGCEFTKGLLAGHEVILLKSGIGKVNAAMSTTILLEKYKPEKVINTGSAGGFHHSLNVGDVVISTEVRHHDVDVTAFNYEYGQVPGMPPGFKADEALVALAEKCMQAEENIQVVKGMIATGDSFMSDPNRVAAIRDKFENLYAVEMEAAAVAQVCHQYEIPFVIIRALSDIAGKESNVSFDQFLDQAALHSTNFIVKVLEELK</sequence>
<proteinExistence type="inferred from homology"/>
<gene>
    <name evidence="1" type="primary">mtnN</name>
    <name type="ordered locus">BC_4368</name>
</gene>
<comment type="function">
    <text evidence="1">Catalyzes the irreversible cleavage of the glycosidic bond in both 5'-methylthioadenosine (MTA) and S-adenosylhomocysteine (SAH/AdoHcy) to adenine and the corresponding thioribose, 5'-methylthioribose and S-ribosylhomocysteine, respectively. Also cleaves 5'-deoxyadenosine, a toxic by-product of radical S-adenosylmethionine (SAM) enzymes, into 5-deoxyribose and adenine.</text>
</comment>
<comment type="catalytic activity">
    <reaction evidence="1">
        <text>S-adenosyl-L-homocysteine + H2O = S-(5-deoxy-D-ribos-5-yl)-L-homocysteine + adenine</text>
        <dbReference type="Rhea" id="RHEA:17805"/>
        <dbReference type="ChEBI" id="CHEBI:15377"/>
        <dbReference type="ChEBI" id="CHEBI:16708"/>
        <dbReference type="ChEBI" id="CHEBI:57856"/>
        <dbReference type="ChEBI" id="CHEBI:58195"/>
        <dbReference type="EC" id="3.2.2.9"/>
    </reaction>
</comment>
<comment type="catalytic activity">
    <reaction evidence="1">
        <text>S-methyl-5'-thioadenosine + H2O = 5-(methylsulfanyl)-D-ribose + adenine</text>
        <dbReference type="Rhea" id="RHEA:13617"/>
        <dbReference type="ChEBI" id="CHEBI:15377"/>
        <dbReference type="ChEBI" id="CHEBI:16708"/>
        <dbReference type="ChEBI" id="CHEBI:17509"/>
        <dbReference type="ChEBI" id="CHEBI:78440"/>
        <dbReference type="EC" id="3.2.2.9"/>
    </reaction>
</comment>
<comment type="catalytic activity">
    <reaction evidence="1">
        <text>5'-deoxyadenosine + H2O = 5-deoxy-D-ribose + adenine</text>
        <dbReference type="Rhea" id="RHEA:29859"/>
        <dbReference type="ChEBI" id="CHEBI:15377"/>
        <dbReference type="ChEBI" id="CHEBI:16708"/>
        <dbReference type="ChEBI" id="CHEBI:17319"/>
        <dbReference type="ChEBI" id="CHEBI:149540"/>
        <dbReference type="EC" id="3.2.2.9"/>
    </reaction>
    <physiologicalReaction direction="left-to-right" evidence="1">
        <dbReference type="Rhea" id="RHEA:29860"/>
    </physiologicalReaction>
</comment>
<comment type="pathway">
    <text evidence="1">Amino-acid biosynthesis; L-methionine biosynthesis via salvage pathway; S-methyl-5-thio-alpha-D-ribose 1-phosphate from S-methyl-5'-thioadenosine (hydrolase route): step 1/2.</text>
</comment>
<comment type="similarity">
    <text evidence="1">Belongs to the PNP/UDP phosphorylase family. MtnN subfamily.</text>
</comment>
<reference key="1">
    <citation type="journal article" date="2003" name="Nature">
        <title>Genome sequence of Bacillus cereus and comparative analysis with Bacillus anthracis.</title>
        <authorList>
            <person name="Ivanova N."/>
            <person name="Sorokin A."/>
            <person name="Anderson I."/>
            <person name="Galleron N."/>
            <person name="Candelon B."/>
            <person name="Kapatral V."/>
            <person name="Bhattacharyya A."/>
            <person name="Reznik G."/>
            <person name="Mikhailova N."/>
            <person name="Lapidus A."/>
            <person name="Chu L."/>
            <person name="Mazur M."/>
            <person name="Goltsman E."/>
            <person name="Larsen N."/>
            <person name="D'Souza M."/>
            <person name="Walunas T."/>
            <person name="Grechkin Y."/>
            <person name="Pusch G."/>
            <person name="Haselkorn R."/>
            <person name="Fonstein M."/>
            <person name="Ehrlich S.D."/>
            <person name="Overbeek R."/>
            <person name="Kyrpides N.C."/>
        </authorList>
    </citation>
    <scope>NUCLEOTIDE SEQUENCE [LARGE SCALE GENOMIC DNA]</scope>
    <source>
        <strain>ATCC 14579 / DSM 31 / CCUG 7414 / JCM 2152 / NBRC 15305 / NCIMB 9373 / NCTC 2599 / NRRL B-3711</strain>
    </source>
</reference>
<accession>Q812S1</accession>
<dbReference type="EC" id="3.2.2.9" evidence="1"/>
<dbReference type="EMBL" id="AE016877">
    <property type="protein sequence ID" value="AAP11281.1"/>
    <property type="molecule type" value="Genomic_DNA"/>
</dbReference>
<dbReference type="RefSeq" id="NP_834080.1">
    <property type="nucleotide sequence ID" value="NC_004722.1"/>
</dbReference>
<dbReference type="RefSeq" id="WP_001217024.1">
    <property type="nucleotide sequence ID" value="NZ_CP138336.1"/>
</dbReference>
<dbReference type="SMR" id="Q812S1"/>
<dbReference type="STRING" id="226900.BC_4368"/>
<dbReference type="MetOSite" id="Q812S1"/>
<dbReference type="KEGG" id="bce:BC4368"/>
<dbReference type="PATRIC" id="fig|226900.8.peg.4518"/>
<dbReference type="HOGENOM" id="CLU_031248_2_2_9"/>
<dbReference type="OrthoDB" id="9792278at2"/>
<dbReference type="UniPathway" id="UPA00904">
    <property type="reaction ID" value="UER00871"/>
</dbReference>
<dbReference type="Proteomes" id="UP000001417">
    <property type="component" value="Chromosome"/>
</dbReference>
<dbReference type="GO" id="GO:0005829">
    <property type="term" value="C:cytosol"/>
    <property type="evidence" value="ECO:0000318"/>
    <property type="project" value="GO_Central"/>
</dbReference>
<dbReference type="GO" id="GO:0008782">
    <property type="term" value="F:adenosylhomocysteine nucleosidase activity"/>
    <property type="evidence" value="ECO:0000318"/>
    <property type="project" value="GO_Central"/>
</dbReference>
<dbReference type="GO" id="GO:0008930">
    <property type="term" value="F:methylthioadenosine nucleosidase activity"/>
    <property type="evidence" value="ECO:0000318"/>
    <property type="project" value="GO_Central"/>
</dbReference>
<dbReference type="GO" id="GO:0019509">
    <property type="term" value="P:L-methionine salvage from methylthioadenosine"/>
    <property type="evidence" value="ECO:0007669"/>
    <property type="project" value="UniProtKB-UniRule"/>
</dbReference>
<dbReference type="GO" id="GO:0019284">
    <property type="term" value="P:L-methionine salvage from S-adenosylmethionine"/>
    <property type="evidence" value="ECO:0000318"/>
    <property type="project" value="GO_Central"/>
</dbReference>
<dbReference type="GO" id="GO:0009164">
    <property type="term" value="P:nucleoside catabolic process"/>
    <property type="evidence" value="ECO:0007669"/>
    <property type="project" value="InterPro"/>
</dbReference>
<dbReference type="CDD" id="cd09008">
    <property type="entry name" value="MTAN"/>
    <property type="match status" value="1"/>
</dbReference>
<dbReference type="FunFam" id="3.40.50.1580:FF:000001">
    <property type="entry name" value="MTA/SAH nucleosidase family protein"/>
    <property type="match status" value="1"/>
</dbReference>
<dbReference type="Gene3D" id="3.40.50.1580">
    <property type="entry name" value="Nucleoside phosphorylase domain"/>
    <property type="match status" value="1"/>
</dbReference>
<dbReference type="HAMAP" id="MF_01684">
    <property type="entry name" value="Salvage_MtnN"/>
    <property type="match status" value="1"/>
</dbReference>
<dbReference type="InterPro" id="IPR010049">
    <property type="entry name" value="MTA_SAH_Nsdase"/>
</dbReference>
<dbReference type="InterPro" id="IPR000845">
    <property type="entry name" value="Nucleoside_phosphorylase_d"/>
</dbReference>
<dbReference type="InterPro" id="IPR035994">
    <property type="entry name" value="Nucleoside_phosphorylase_sf"/>
</dbReference>
<dbReference type="NCBIfam" id="TIGR01704">
    <property type="entry name" value="MTA_SAH-Nsdase"/>
    <property type="match status" value="1"/>
</dbReference>
<dbReference type="NCBIfam" id="NF004079">
    <property type="entry name" value="PRK05584.1"/>
    <property type="match status" value="1"/>
</dbReference>
<dbReference type="PANTHER" id="PTHR46832">
    <property type="entry name" value="5'-METHYLTHIOADENOSINE/S-ADENOSYLHOMOCYSTEINE NUCLEOSIDASE"/>
    <property type="match status" value="1"/>
</dbReference>
<dbReference type="PANTHER" id="PTHR46832:SF1">
    <property type="entry name" value="5'-METHYLTHIOADENOSINE_S-ADENOSYLHOMOCYSTEINE NUCLEOSIDASE"/>
    <property type="match status" value="1"/>
</dbReference>
<dbReference type="Pfam" id="PF01048">
    <property type="entry name" value="PNP_UDP_1"/>
    <property type="match status" value="1"/>
</dbReference>
<dbReference type="SUPFAM" id="SSF53167">
    <property type="entry name" value="Purine and uridine phosphorylases"/>
    <property type="match status" value="1"/>
</dbReference>